<protein>
    <recommendedName>
        <fullName evidence="1">Uracil-DNA glycosylase</fullName>
        <shortName evidence="1">UDG</shortName>
        <ecNumber evidence="1">3.2.2.27</ecNumber>
    </recommendedName>
</protein>
<proteinExistence type="inferred from homology"/>
<comment type="function">
    <text evidence="1">Excises uracil residues from the DNA which can arise as a result of misincorporation of dUMP residues by DNA polymerase or due to deamination of cytosine.</text>
</comment>
<comment type="catalytic activity">
    <reaction evidence="1">
        <text>Hydrolyzes single-stranded DNA or mismatched double-stranded DNA and polynucleotides, releasing free uracil.</text>
        <dbReference type="EC" id="3.2.2.27"/>
    </reaction>
</comment>
<comment type="subcellular location">
    <subcellularLocation>
        <location evidence="1">Cytoplasm</location>
    </subcellularLocation>
</comment>
<comment type="similarity">
    <text evidence="1">Belongs to the uracil-DNA glycosylase (UDG) superfamily. UNG family.</text>
</comment>
<gene>
    <name evidence="1" type="primary">ung</name>
    <name type="ordered locus">NTHI0025</name>
</gene>
<keyword id="KW-0963">Cytoplasm</keyword>
<keyword id="KW-0227">DNA damage</keyword>
<keyword id="KW-0234">DNA repair</keyword>
<keyword id="KW-0378">Hydrolase</keyword>
<reference key="1">
    <citation type="journal article" date="2005" name="J. Bacteriol.">
        <title>Genomic sequence of an otitis media isolate of nontypeable Haemophilus influenzae: comparative study with H. influenzae serotype d, strain KW20.</title>
        <authorList>
            <person name="Harrison A."/>
            <person name="Dyer D.W."/>
            <person name="Gillaspy A."/>
            <person name="Ray W.C."/>
            <person name="Mungur R."/>
            <person name="Carson M.B."/>
            <person name="Zhong H."/>
            <person name="Gipson J."/>
            <person name="Gipson M."/>
            <person name="Johnson L.S."/>
            <person name="Lewis L."/>
            <person name="Bakaletz L.O."/>
            <person name="Munson R.S. Jr."/>
        </authorList>
    </citation>
    <scope>NUCLEOTIDE SEQUENCE [LARGE SCALE GENOMIC DNA]</scope>
    <source>
        <strain>86-028NP</strain>
    </source>
</reference>
<organism>
    <name type="scientific">Haemophilus influenzae (strain 86-028NP)</name>
    <dbReference type="NCBI Taxonomy" id="281310"/>
    <lineage>
        <taxon>Bacteria</taxon>
        <taxon>Pseudomonadati</taxon>
        <taxon>Pseudomonadota</taxon>
        <taxon>Gammaproteobacteria</taxon>
        <taxon>Pasteurellales</taxon>
        <taxon>Pasteurellaceae</taxon>
        <taxon>Haemophilus</taxon>
    </lineage>
</organism>
<dbReference type="EC" id="3.2.2.27" evidence="1"/>
<dbReference type="EMBL" id="CP000057">
    <property type="protein sequence ID" value="AAX87021.1"/>
    <property type="molecule type" value="Genomic_DNA"/>
</dbReference>
<dbReference type="RefSeq" id="WP_005687458.1">
    <property type="nucleotide sequence ID" value="NC_007146.2"/>
</dbReference>
<dbReference type="SMR" id="Q4QPM6"/>
<dbReference type="KEGG" id="hit:NTHI0025"/>
<dbReference type="HOGENOM" id="CLU_032162_3_0_6"/>
<dbReference type="Proteomes" id="UP000002525">
    <property type="component" value="Chromosome"/>
</dbReference>
<dbReference type="GO" id="GO:0005737">
    <property type="term" value="C:cytoplasm"/>
    <property type="evidence" value="ECO:0007669"/>
    <property type="project" value="UniProtKB-SubCell"/>
</dbReference>
<dbReference type="GO" id="GO:0004844">
    <property type="term" value="F:uracil DNA N-glycosylase activity"/>
    <property type="evidence" value="ECO:0007669"/>
    <property type="project" value="UniProtKB-UniRule"/>
</dbReference>
<dbReference type="GO" id="GO:0097510">
    <property type="term" value="P:base-excision repair, AP site formation via deaminated base removal"/>
    <property type="evidence" value="ECO:0007669"/>
    <property type="project" value="TreeGrafter"/>
</dbReference>
<dbReference type="CDD" id="cd10027">
    <property type="entry name" value="UDG-F1-like"/>
    <property type="match status" value="1"/>
</dbReference>
<dbReference type="FunFam" id="3.40.470.10:FF:000001">
    <property type="entry name" value="Uracil-DNA glycosylase"/>
    <property type="match status" value="1"/>
</dbReference>
<dbReference type="Gene3D" id="3.40.470.10">
    <property type="entry name" value="Uracil-DNA glycosylase-like domain"/>
    <property type="match status" value="1"/>
</dbReference>
<dbReference type="HAMAP" id="MF_00148">
    <property type="entry name" value="UDG"/>
    <property type="match status" value="1"/>
</dbReference>
<dbReference type="InterPro" id="IPR002043">
    <property type="entry name" value="UDG_fam1"/>
</dbReference>
<dbReference type="InterPro" id="IPR018085">
    <property type="entry name" value="Ura-DNA_Glyclase_AS"/>
</dbReference>
<dbReference type="InterPro" id="IPR005122">
    <property type="entry name" value="Uracil-DNA_glycosylase-like"/>
</dbReference>
<dbReference type="InterPro" id="IPR036895">
    <property type="entry name" value="Uracil-DNA_glycosylase-like_sf"/>
</dbReference>
<dbReference type="NCBIfam" id="NF003588">
    <property type="entry name" value="PRK05254.1-1"/>
    <property type="match status" value="1"/>
</dbReference>
<dbReference type="NCBIfam" id="NF003589">
    <property type="entry name" value="PRK05254.1-2"/>
    <property type="match status" value="1"/>
</dbReference>
<dbReference type="NCBIfam" id="NF003591">
    <property type="entry name" value="PRK05254.1-4"/>
    <property type="match status" value="1"/>
</dbReference>
<dbReference type="NCBIfam" id="NF003592">
    <property type="entry name" value="PRK05254.1-5"/>
    <property type="match status" value="1"/>
</dbReference>
<dbReference type="NCBIfam" id="TIGR00628">
    <property type="entry name" value="ung"/>
    <property type="match status" value="1"/>
</dbReference>
<dbReference type="PANTHER" id="PTHR11264">
    <property type="entry name" value="URACIL-DNA GLYCOSYLASE"/>
    <property type="match status" value="1"/>
</dbReference>
<dbReference type="PANTHER" id="PTHR11264:SF0">
    <property type="entry name" value="URACIL-DNA GLYCOSYLASE"/>
    <property type="match status" value="1"/>
</dbReference>
<dbReference type="Pfam" id="PF03167">
    <property type="entry name" value="UDG"/>
    <property type="match status" value="1"/>
</dbReference>
<dbReference type="SMART" id="SM00986">
    <property type="entry name" value="UDG"/>
    <property type="match status" value="1"/>
</dbReference>
<dbReference type="SMART" id="SM00987">
    <property type="entry name" value="UreE_C"/>
    <property type="match status" value="1"/>
</dbReference>
<dbReference type="SUPFAM" id="SSF52141">
    <property type="entry name" value="Uracil-DNA glycosylase-like"/>
    <property type="match status" value="1"/>
</dbReference>
<dbReference type="PROSITE" id="PS00130">
    <property type="entry name" value="U_DNA_GLYCOSYLASE"/>
    <property type="match status" value="1"/>
</dbReference>
<name>UNG_HAEI8</name>
<accession>Q4QPM6</accession>
<sequence>MKNWTDVIGKEKEQPYFQHALQQVHLARANGKTIYPPQEEVFNAFKYTAFEDVKVVILGQDPYHGANQAHGLAFSVKPEVAIPPSLLNMYKELTQDISGFQMPSNGYLVKWAEQGVLLLNTVLTVERGMAHSHANLGWERFTDKVIAVLNEHREKLVFLLWGSHAQKKGQIIDRTRHLVLTAPHPSPLSAHRGFFGCHHFSKTNSYLESNGMKPIDWQI</sequence>
<evidence type="ECO:0000255" key="1">
    <source>
        <dbReference type="HAMAP-Rule" id="MF_00148"/>
    </source>
</evidence>
<feature type="chain" id="PRO_1000009896" description="Uracil-DNA glycosylase">
    <location>
        <begin position="1"/>
        <end position="219"/>
    </location>
</feature>
<feature type="active site" description="Proton acceptor" evidence="1">
    <location>
        <position position="61"/>
    </location>
</feature>